<evidence type="ECO:0000255" key="1">
    <source>
        <dbReference type="HAMAP-Rule" id="MF_00248"/>
    </source>
</evidence>
<name>HSLV_PEDPA</name>
<proteinExistence type="inferred from homology"/>
<keyword id="KW-0021">Allosteric enzyme</keyword>
<keyword id="KW-0963">Cytoplasm</keyword>
<keyword id="KW-0378">Hydrolase</keyword>
<keyword id="KW-0479">Metal-binding</keyword>
<keyword id="KW-0645">Protease</keyword>
<keyword id="KW-0915">Sodium</keyword>
<keyword id="KW-0888">Threonine protease</keyword>
<dbReference type="EC" id="3.4.25.2" evidence="1"/>
<dbReference type="EMBL" id="CP000422">
    <property type="protein sequence ID" value="ABJ68019.1"/>
    <property type="molecule type" value="Genomic_DNA"/>
</dbReference>
<dbReference type="RefSeq" id="WP_002833088.1">
    <property type="nucleotide sequence ID" value="NC_008525.1"/>
</dbReference>
<dbReference type="SMR" id="Q03FK3"/>
<dbReference type="STRING" id="278197.PEPE_0963"/>
<dbReference type="MEROPS" id="T01.007"/>
<dbReference type="GeneID" id="33062033"/>
<dbReference type="KEGG" id="ppe:PEPE_0963"/>
<dbReference type="eggNOG" id="COG5405">
    <property type="taxonomic scope" value="Bacteria"/>
</dbReference>
<dbReference type="HOGENOM" id="CLU_093872_1_1_9"/>
<dbReference type="OrthoDB" id="9804884at2"/>
<dbReference type="Proteomes" id="UP000000773">
    <property type="component" value="Chromosome"/>
</dbReference>
<dbReference type="GO" id="GO:0009376">
    <property type="term" value="C:HslUV protease complex"/>
    <property type="evidence" value="ECO:0007669"/>
    <property type="project" value="UniProtKB-UniRule"/>
</dbReference>
<dbReference type="GO" id="GO:0005839">
    <property type="term" value="C:proteasome core complex"/>
    <property type="evidence" value="ECO:0007669"/>
    <property type="project" value="InterPro"/>
</dbReference>
<dbReference type="GO" id="GO:0046872">
    <property type="term" value="F:metal ion binding"/>
    <property type="evidence" value="ECO:0007669"/>
    <property type="project" value="UniProtKB-KW"/>
</dbReference>
<dbReference type="GO" id="GO:0004298">
    <property type="term" value="F:threonine-type endopeptidase activity"/>
    <property type="evidence" value="ECO:0007669"/>
    <property type="project" value="UniProtKB-KW"/>
</dbReference>
<dbReference type="GO" id="GO:0051603">
    <property type="term" value="P:proteolysis involved in protein catabolic process"/>
    <property type="evidence" value="ECO:0007669"/>
    <property type="project" value="InterPro"/>
</dbReference>
<dbReference type="Gene3D" id="3.60.20.10">
    <property type="entry name" value="Glutamine Phosphoribosylpyrophosphate, subunit 1, domain 1"/>
    <property type="match status" value="1"/>
</dbReference>
<dbReference type="HAMAP" id="MF_00248">
    <property type="entry name" value="HslV"/>
    <property type="match status" value="1"/>
</dbReference>
<dbReference type="InterPro" id="IPR022281">
    <property type="entry name" value="ATP-dep_Prtase_HsIV_su"/>
</dbReference>
<dbReference type="InterPro" id="IPR029055">
    <property type="entry name" value="Ntn_hydrolases_N"/>
</dbReference>
<dbReference type="InterPro" id="IPR001353">
    <property type="entry name" value="Proteasome_sua/b"/>
</dbReference>
<dbReference type="InterPro" id="IPR023333">
    <property type="entry name" value="Proteasome_suB-type"/>
</dbReference>
<dbReference type="NCBIfam" id="TIGR03692">
    <property type="entry name" value="ATP_dep_HslV"/>
    <property type="match status" value="1"/>
</dbReference>
<dbReference type="NCBIfam" id="NF003964">
    <property type="entry name" value="PRK05456.1"/>
    <property type="match status" value="1"/>
</dbReference>
<dbReference type="PANTHER" id="PTHR32194:SF0">
    <property type="entry name" value="ATP-DEPENDENT PROTEASE SUBUNIT HSLV"/>
    <property type="match status" value="1"/>
</dbReference>
<dbReference type="PANTHER" id="PTHR32194">
    <property type="entry name" value="METALLOPROTEASE TLDD"/>
    <property type="match status" value="1"/>
</dbReference>
<dbReference type="Pfam" id="PF00227">
    <property type="entry name" value="Proteasome"/>
    <property type="match status" value="1"/>
</dbReference>
<dbReference type="SUPFAM" id="SSF56235">
    <property type="entry name" value="N-terminal nucleophile aminohydrolases (Ntn hydrolases)"/>
    <property type="match status" value="1"/>
</dbReference>
<dbReference type="PROSITE" id="PS51476">
    <property type="entry name" value="PROTEASOME_BETA_2"/>
    <property type="match status" value="1"/>
</dbReference>
<protein>
    <recommendedName>
        <fullName evidence="1">ATP-dependent protease subunit HslV</fullName>
        <ecNumber evidence="1">3.4.25.2</ecNumber>
    </recommendedName>
</protein>
<feature type="chain" id="PRO_1000012643" description="ATP-dependent protease subunit HslV">
    <location>
        <begin position="1"/>
        <end position="184"/>
    </location>
</feature>
<feature type="active site" evidence="1">
    <location>
        <position position="8"/>
    </location>
</feature>
<feature type="binding site" evidence="1">
    <location>
        <position position="165"/>
    </location>
    <ligand>
        <name>Na(+)</name>
        <dbReference type="ChEBI" id="CHEBI:29101"/>
    </ligand>
</feature>
<feature type="binding site" evidence="1">
    <location>
        <position position="168"/>
    </location>
    <ligand>
        <name>Na(+)</name>
        <dbReference type="ChEBI" id="CHEBI:29101"/>
    </ligand>
</feature>
<feature type="binding site" evidence="1">
    <location>
        <position position="171"/>
    </location>
    <ligand>
        <name>Na(+)</name>
        <dbReference type="ChEBI" id="CHEBI:29101"/>
    </ligand>
</feature>
<sequence>MPVKFDATTIIAISHNGENAMAGDGQVTMGEKFIMKGTARKVRRIYDGKVIVGFAGSVADAFNLEEKFEKKLSEYSGNLQRASVELAKIWRGDQQLQKLEAMLIVMDEKEMYLVSGSGEVIAPDDGILAIGSGGNFALAAAKALKKHATQVSAKEMAKTAINVAGDIDIFTNHNVIALDFKEED</sequence>
<accession>Q03FK3</accession>
<organism>
    <name type="scientific">Pediococcus pentosaceus (strain ATCC 25745 / CCUG 21536 / LMG 10740 / 183-1w)</name>
    <dbReference type="NCBI Taxonomy" id="278197"/>
    <lineage>
        <taxon>Bacteria</taxon>
        <taxon>Bacillati</taxon>
        <taxon>Bacillota</taxon>
        <taxon>Bacilli</taxon>
        <taxon>Lactobacillales</taxon>
        <taxon>Lactobacillaceae</taxon>
        <taxon>Pediococcus</taxon>
    </lineage>
</organism>
<reference key="1">
    <citation type="journal article" date="2006" name="Proc. Natl. Acad. Sci. U.S.A.">
        <title>Comparative genomics of the lactic acid bacteria.</title>
        <authorList>
            <person name="Makarova K.S."/>
            <person name="Slesarev A."/>
            <person name="Wolf Y.I."/>
            <person name="Sorokin A."/>
            <person name="Mirkin B."/>
            <person name="Koonin E.V."/>
            <person name="Pavlov A."/>
            <person name="Pavlova N."/>
            <person name="Karamychev V."/>
            <person name="Polouchine N."/>
            <person name="Shakhova V."/>
            <person name="Grigoriev I."/>
            <person name="Lou Y."/>
            <person name="Rohksar D."/>
            <person name="Lucas S."/>
            <person name="Huang K."/>
            <person name="Goodstein D.M."/>
            <person name="Hawkins T."/>
            <person name="Plengvidhya V."/>
            <person name="Welker D."/>
            <person name="Hughes J."/>
            <person name="Goh Y."/>
            <person name="Benson A."/>
            <person name="Baldwin K."/>
            <person name="Lee J.-H."/>
            <person name="Diaz-Muniz I."/>
            <person name="Dosti B."/>
            <person name="Smeianov V."/>
            <person name="Wechter W."/>
            <person name="Barabote R."/>
            <person name="Lorca G."/>
            <person name="Altermann E."/>
            <person name="Barrangou R."/>
            <person name="Ganesan B."/>
            <person name="Xie Y."/>
            <person name="Rawsthorne H."/>
            <person name="Tamir D."/>
            <person name="Parker C."/>
            <person name="Breidt F."/>
            <person name="Broadbent J.R."/>
            <person name="Hutkins R."/>
            <person name="O'Sullivan D."/>
            <person name="Steele J."/>
            <person name="Unlu G."/>
            <person name="Saier M.H. Jr."/>
            <person name="Klaenhammer T."/>
            <person name="Richardson P."/>
            <person name="Kozyavkin S."/>
            <person name="Weimer B.C."/>
            <person name="Mills D.A."/>
        </authorList>
    </citation>
    <scope>NUCLEOTIDE SEQUENCE [LARGE SCALE GENOMIC DNA]</scope>
    <source>
        <strain>ATCC 25745 / CCUG 21536 / LMG 10740 / 183-1w</strain>
    </source>
</reference>
<gene>
    <name evidence="1" type="primary">hslV</name>
    <name type="ordered locus">PEPE_0963</name>
</gene>
<comment type="function">
    <text evidence="1">Protease subunit of a proteasome-like degradation complex believed to be a general protein degrading machinery.</text>
</comment>
<comment type="catalytic activity">
    <reaction evidence="1">
        <text>ATP-dependent cleavage of peptide bonds with broad specificity.</text>
        <dbReference type="EC" id="3.4.25.2"/>
    </reaction>
</comment>
<comment type="activity regulation">
    <text evidence="1">Allosterically activated by HslU binding.</text>
</comment>
<comment type="subunit">
    <text evidence="1">A double ring-shaped homohexamer of HslV is capped on each side by a ring-shaped HslU homohexamer. The assembly of the HslU/HslV complex is dependent on binding of ATP.</text>
</comment>
<comment type="subcellular location">
    <subcellularLocation>
        <location evidence="1">Cytoplasm</location>
    </subcellularLocation>
</comment>
<comment type="similarity">
    <text evidence="1">Belongs to the peptidase T1B family. HslV subfamily.</text>
</comment>